<accession>B7J551</accession>
<organism>
    <name type="scientific">Acidithiobacillus ferrooxidans (strain ATCC 23270 / DSM 14882 / CIP 104768 / NCIMB 8455)</name>
    <name type="common">Ferrobacillus ferrooxidans (strain ATCC 23270)</name>
    <dbReference type="NCBI Taxonomy" id="243159"/>
    <lineage>
        <taxon>Bacteria</taxon>
        <taxon>Pseudomonadati</taxon>
        <taxon>Pseudomonadota</taxon>
        <taxon>Acidithiobacillia</taxon>
        <taxon>Acidithiobacillales</taxon>
        <taxon>Acidithiobacillaceae</taxon>
        <taxon>Acidithiobacillus</taxon>
    </lineage>
</organism>
<keyword id="KW-0067">ATP-binding</keyword>
<keyword id="KW-0963">Cytoplasm</keyword>
<keyword id="KW-0460">Magnesium</keyword>
<keyword id="KW-0479">Metal-binding</keyword>
<keyword id="KW-0547">Nucleotide-binding</keyword>
<keyword id="KW-0554">One-carbon metabolism</keyword>
<keyword id="KW-0630">Potassium</keyword>
<keyword id="KW-1185">Reference proteome</keyword>
<keyword id="KW-0808">Transferase</keyword>
<sequence>MSKSHLFTSESVSEGHPDKVADQISDAILDAILAQDPRGRVAAETLITTGLIVLAGEITTTAVVDYADVARQTVRRIGYNSSDMGFDWASCAVVQTLDKQSPDIAQGVDEGAGLDLDQGAGDQGLMFGFACDETDVLMPTPIYFAHRLTERQAMVRKDGRLPWLRPDAKSQVTVRYEDDRPVAIDTVVLSTQHAPDISHADLVEAVREEIIKPVLPPEMIHKDTKYLINPTGRFVIGGPVGDCGLTGRKIIVDTYGGQGSHGGGAFSGKDPSKVDRSSSYAGRYVAKNIVAAGLARRCEVQVAYAIGVSQPVSLMVDTFGTGVIDDDRIAALVQEHFDLRPKGIIQMLDLLRPIYAKTAAYGHFGREEPEFTWERTDKAAVLRDAAGLR</sequence>
<protein>
    <recommendedName>
        <fullName evidence="1">S-adenosylmethionine synthase</fullName>
        <shortName evidence="1">AdoMet synthase</shortName>
        <ecNumber evidence="1">2.5.1.6</ecNumber>
    </recommendedName>
    <alternativeName>
        <fullName evidence="1">MAT</fullName>
    </alternativeName>
    <alternativeName>
        <fullName evidence="1">Methionine adenosyltransferase</fullName>
    </alternativeName>
</protein>
<gene>
    <name evidence="1" type="primary">metK</name>
    <name type="ordered locus">AFE_0532</name>
</gene>
<comment type="function">
    <text evidence="1">Catalyzes the formation of S-adenosylmethionine (AdoMet) from methionine and ATP. The overall synthetic reaction is composed of two sequential steps, AdoMet formation and the subsequent tripolyphosphate hydrolysis which occurs prior to release of AdoMet from the enzyme.</text>
</comment>
<comment type="catalytic activity">
    <reaction evidence="1">
        <text>L-methionine + ATP + H2O = S-adenosyl-L-methionine + phosphate + diphosphate</text>
        <dbReference type="Rhea" id="RHEA:21080"/>
        <dbReference type="ChEBI" id="CHEBI:15377"/>
        <dbReference type="ChEBI" id="CHEBI:30616"/>
        <dbReference type="ChEBI" id="CHEBI:33019"/>
        <dbReference type="ChEBI" id="CHEBI:43474"/>
        <dbReference type="ChEBI" id="CHEBI:57844"/>
        <dbReference type="ChEBI" id="CHEBI:59789"/>
        <dbReference type="EC" id="2.5.1.6"/>
    </reaction>
</comment>
<comment type="cofactor">
    <cofactor evidence="1">
        <name>Mg(2+)</name>
        <dbReference type="ChEBI" id="CHEBI:18420"/>
    </cofactor>
    <text evidence="1">Binds 2 divalent ions per subunit.</text>
</comment>
<comment type="cofactor">
    <cofactor evidence="1">
        <name>K(+)</name>
        <dbReference type="ChEBI" id="CHEBI:29103"/>
    </cofactor>
    <text evidence="1">Binds 1 potassium ion per subunit.</text>
</comment>
<comment type="pathway">
    <text evidence="1">Amino-acid biosynthesis; S-adenosyl-L-methionine biosynthesis; S-adenosyl-L-methionine from L-methionine: step 1/1.</text>
</comment>
<comment type="subunit">
    <text evidence="1">Homotetramer; dimer of dimers.</text>
</comment>
<comment type="subcellular location">
    <subcellularLocation>
        <location evidence="1">Cytoplasm</location>
    </subcellularLocation>
</comment>
<comment type="similarity">
    <text evidence="1">Belongs to the AdoMet synthase family.</text>
</comment>
<reference key="1">
    <citation type="journal article" date="2008" name="BMC Genomics">
        <title>Acidithiobacillus ferrooxidans metabolism: from genome sequence to industrial applications.</title>
        <authorList>
            <person name="Valdes J."/>
            <person name="Pedroso I."/>
            <person name="Quatrini R."/>
            <person name="Dodson R.J."/>
            <person name="Tettelin H."/>
            <person name="Blake R. II"/>
            <person name="Eisen J.A."/>
            <person name="Holmes D.S."/>
        </authorList>
    </citation>
    <scope>NUCLEOTIDE SEQUENCE [LARGE SCALE GENOMIC DNA]</scope>
    <source>
        <strain>ATCC 23270 / DSM 14882 / CIP 104768 / NCIMB 8455</strain>
    </source>
</reference>
<proteinExistence type="inferred from homology"/>
<name>METK_ACIF2</name>
<feature type="chain" id="PRO_1000196679" description="S-adenosylmethionine synthase">
    <location>
        <begin position="1"/>
        <end position="389"/>
    </location>
</feature>
<feature type="region of interest" description="Flexible loop" evidence="1">
    <location>
        <begin position="100"/>
        <end position="110"/>
    </location>
</feature>
<feature type="binding site" description="in other chain" evidence="1">
    <location>
        <position position="16"/>
    </location>
    <ligand>
        <name>ATP</name>
        <dbReference type="ChEBI" id="CHEBI:30616"/>
        <note>ligand shared between two neighboring subunits</note>
    </ligand>
</feature>
<feature type="binding site" evidence="1">
    <location>
        <position position="18"/>
    </location>
    <ligand>
        <name>Mg(2+)</name>
        <dbReference type="ChEBI" id="CHEBI:18420"/>
    </ligand>
</feature>
<feature type="binding site" evidence="1">
    <location>
        <position position="44"/>
    </location>
    <ligand>
        <name>K(+)</name>
        <dbReference type="ChEBI" id="CHEBI:29103"/>
    </ligand>
</feature>
<feature type="binding site" description="in other chain" evidence="1">
    <location>
        <position position="57"/>
    </location>
    <ligand>
        <name>L-methionine</name>
        <dbReference type="ChEBI" id="CHEBI:57844"/>
        <note>ligand shared between two neighboring subunits</note>
    </ligand>
</feature>
<feature type="binding site" description="in other chain" evidence="1">
    <location>
        <position position="100"/>
    </location>
    <ligand>
        <name>L-methionine</name>
        <dbReference type="ChEBI" id="CHEBI:57844"/>
        <note>ligand shared between two neighboring subunits</note>
    </ligand>
</feature>
<feature type="binding site" description="in other chain" evidence="1">
    <location>
        <begin position="167"/>
        <end position="169"/>
    </location>
    <ligand>
        <name>ATP</name>
        <dbReference type="ChEBI" id="CHEBI:30616"/>
        <note>ligand shared between two neighboring subunits</note>
    </ligand>
</feature>
<feature type="binding site" description="in other chain" evidence="1">
    <location>
        <begin position="233"/>
        <end position="234"/>
    </location>
    <ligand>
        <name>ATP</name>
        <dbReference type="ChEBI" id="CHEBI:30616"/>
        <note>ligand shared between two neighboring subunits</note>
    </ligand>
</feature>
<feature type="binding site" evidence="1">
    <location>
        <position position="242"/>
    </location>
    <ligand>
        <name>ATP</name>
        <dbReference type="ChEBI" id="CHEBI:30616"/>
        <note>ligand shared between two neighboring subunits</note>
    </ligand>
</feature>
<feature type="binding site" evidence="1">
    <location>
        <position position="242"/>
    </location>
    <ligand>
        <name>L-methionine</name>
        <dbReference type="ChEBI" id="CHEBI:57844"/>
        <note>ligand shared between two neighboring subunits</note>
    </ligand>
</feature>
<feature type="binding site" description="in other chain" evidence="1">
    <location>
        <begin position="248"/>
        <end position="249"/>
    </location>
    <ligand>
        <name>ATP</name>
        <dbReference type="ChEBI" id="CHEBI:30616"/>
        <note>ligand shared between two neighboring subunits</note>
    </ligand>
</feature>
<feature type="binding site" evidence="1">
    <location>
        <position position="265"/>
    </location>
    <ligand>
        <name>ATP</name>
        <dbReference type="ChEBI" id="CHEBI:30616"/>
        <note>ligand shared between two neighboring subunits</note>
    </ligand>
</feature>
<feature type="binding site" evidence="1">
    <location>
        <position position="269"/>
    </location>
    <ligand>
        <name>ATP</name>
        <dbReference type="ChEBI" id="CHEBI:30616"/>
        <note>ligand shared between two neighboring subunits</note>
    </ligand>
</feature>
<feature type="binding site" description="in other chain" evidence="1">
    <location>
        <position position="273"/>
    </location>
    <ligand>
        <name>L-methionine</name>
        <dbReference type="ChEBI" id="CHEBI:57844"/>
        <note>ligand shared between two neighboring subunits</note>
    </ligand>
</feature>
<evidence type="ECO:0000255" key="1">
    <source>
        <dbReference type="HAMAP-Rule" id="MF_00086"/>
    </source>
</evidence>
<dbReference type="EC" id="2.5.1.6" evidence="1"/>
<dbReference type="EMBL" id="CP001219">
    <property type="protein sequence ID" value="ACK79981.1"/>
    <property type="molecule type" value="Genomic_DNA"/>
</dbReference>
<dbReference type="RefSeq" id="WP_012536187.1">
    <property type="nucleotide sequence ID" value="NC_011761.1"/>
</dbReference>
<dbReference type="SMR" id="B7J551"/>
<dbReference type="STRING" id="243159.AFE_0532"/>
<dbReference type="PaxDb" id="243159-AFE_0532"/>
<dbReference type="GeneID" id="65279893"/>
<dbReference type="KEGG" id="afr:AFE_0532"/>
<dbReference type="eggNOG" id="COG0192">
    <property type="taxonomic scope" value="Bacteria"/>
</dbReference>
<dbReference type="HOGENOM" id="CLU_041802_1_1_6"/>
<dbReference type="UniPathway" id="UPA00315">
    <property type="reaction ID" value="UER00080"/>
</dbReference>
<dbReference type="Proteomes" id="UP000001362">
    <property type="component" value="Chromosome"/>
</dbReference>
<dbReference type="GO" id="GO:0005737">
    <property type="term" value="C:cytoplasm"/>
    <property type="evidence" value="ECO:0007669"/>
    <property type="project" value="UniProtKB-SubCell"/>
</dbReference>
<dbReference type="GO" id="GO:0005524">
    <property type="term" value="F:ATP binding"/>
    <property type="evidence" value="ECO:0007669"/>
    <property type="project" value="UniProtKB-UniRule"/>
</dbReference>
<dbReference type="GO" id="GO:0000287">
    <property type="term" value="F:magnesium ion binding"/>
    <property type="evidence" value="ECO:0007669"/>
    <property type="project" value="UniProtKB-UniRule"/>
</dbReference>
<dbReference type="GO" id="GO:0004478">
    <property type="term" value="F:methionine adenosyltransferase activity"/>
    <property type="evidence" value="ECO:0007669"/>
    <property type="project" value="UniProtKB-UniRule"/>
</dbReference>
<dbReference type="GO" id="GO:0006730">
    <property type="term" value="P:one-carbon metabolic process"/>
    <property type="evidence" value="ECO:0007669"/>
    <property type="project" value="UniProtKB-KW"/>
</dbReference>
<dbReference type="GO" id="GO:0006556">
    <property type="term" value="P:S-adenosylmethionine biosynthetic process"/>
    <property type="evidence" value="ECO:0007669"/>
    <property type="project" value="UniProtKB-UniRule"/>
</dbReference>
<dbReference type="CDD" id="cd18079">
    <property type="entry name" value="S-AdoMet_synt"/>
    <property type="match status" value="1"/>
</dbReference>
<dbReference type="FunFam" id="3.30.300.10:FF:000003">
    <property type="entry name" value="S-adenosylmethionine synthase"/>
    <property type="match status" value="1"/>
</dbReference>
<dbReference type="FunFam" id="3.30.300.10:FF:000004">
    <property type="entry name" value="S-adenosylmethionine synthase"/>
    <property type="match status" value="1"/>
</dbReference>
<dbReference type="Gene3D" id="3.30.300.10">
    <property type="match status" value="3"/>
</dbReference>
<dbReference type="HAMAP" id="MF_00086">
    <property type="entry name" value="S_AdoMet_synth1"/>
    <property type="match status" value="1"/>
</dbReference>
<dbReference type="InterPro" id="IPR022631">
    <property type="entry name" value="ADOMET_SYNTHASE_CS"/>
</dbReference>
<dbReference type="InterPro" id="IPR022630">
    <property type="entry name" value="S-AdoMet_synt_C"/>
</dbReference>
<dbReference type="InterPro" id="IPR022629">
    <property type="entry name" value="S-AdoMet_synt_central"/>
</dbReference>
<dbReference type="InterPro" id="IPR022628">
    <property type="entry name" value="S-AdoMet_synt_N"/>
</dbReference>
<dbReference type="InterPro" id="IPR002133">
    <property type="entry name" value="S-AdoMet_synthetase"/>
</dbReference>
<dbReference type="InterPro" id="IPR022636">
    <property type="entry name" value="S-AdoMet_synthetase_sfam"/>
</dbReference>
<dbReference type="NCBIfam" id="TIGR01034">
    <property type="entry name" value="metK"/>
    <property type="match status" value="1"/>
</dbReference>
<dbReference type="PANTHER" id="PTHR11964">
    <property type="entry name" value="S-ADENOSYLMETHIONINE SYNTHETASE"/>
    <property type="match status" value="1"/>
</dbReference>
<dbReference type="Pfam" id="PF02773">
    <property type="entry name" value="S-AdoMet_synt_C"/>
    <property type="match status" value="1"/>
</dbReference>
<dbReference type="Pfam" id="PF02772">
    <property type="entry name" value="S-AdoMet_synt_M"/>
    <property type="match status" value="1"/>
</dbReference>
<dbReference type="Pfam" id="PF00438">
    <property type="entry name" value="S-AdoMet_synt_N"/>
    <property type="match status" value="1"/>
</dbReference>
<dbReference type="PIRSF" id="PIRSF000497">
    <property type="entry name" value="MAT"/>
    <property type="match status" value="1"/>
</dbReference>
<dbReference type="SUPFAM" id="SSF55973">
    <property type="entry name" value="S-adenosylmethionine synthetase"/>
    <property type="match status" value="3"/>
</dbReference>
<dbReference type="PROSITE" id="PS00376">
    <property type="entry name" value="ADOMET_SYNTHASE_1"/>
    <property type="match status" value="1"/>
</dbReference>
<dbReference type="PROSITE" id="PS00377">
    <property type="entry name" value="ADOMET_SYNTHASE_2"/>
    <property type="match status" value="1"/>
</dbReference>